<protein>
    <recommendedName>
        <fullName evidence="1">Undecaprenyl-diphosphatase</fullName>
        <ecNumber evidence="1">3.6.1.27</ecNumber>
    </recommendedName>
    <alternativeName>
        <fullName evidence="1">Bacitracin resistance protein</fullName>
    </alternativeName>
    <alternativeName>
        <fullName evidence="1">Undecaprenyl pyrophosphate phosphatase</fullName>
    </alternativeName>
</protein>
<organism>
    <name type="scientific">Escherichia coli O139:H28 (strain E24377A / ETEC)</name>
    <dbReference type="NCBI Taxonomy" id="331111"/>
    <lineage>
        <taxon>Bacteria</taxon>
        <taxon>Pseudomonadati</taxon>
        <taxon>Pseudomonadota</taxon>
        <taxon>Gammaproteobacteria</taxon>
        <taxon>Enterobacterales</taxon>
        <taxon>Enterobacteriaceae</taxon>
        <taxon>Escherichia</taxon>
    </lineage>
</organism>
<name>UPPP_ECO24</name>
<evidence type="ECO:0000255" key="1">
    <source>
        <dbReference type="HAMAP-Rule" id="MF_01006"/>
    </source>
</evidence>
<accession>A7ZRT8</accession>
<keyword id="KW-0046">Antibiotic resistance</keyword>
<keyword id="KW-0997">Cell inner membrane</keyword>
<keyword id="KW-1003">Cell membrane</keyword>
<keyword id="KW-0133">Cell shape</keyword>
<keyword id="KW-0961">Cell wall biogenesis/degradation</keyword>
<keyword id="KW-0378">Hydrolase</keyword>
<keyword id="KW-0472">Membrane</keyword>
<keyword id="KW-0573">Peptidoglycan synthesis</keyword>
<keyword id="KW-1185">Reference proteome</keyword>
<keyword id="KW-0812">Transmembrane</keyword>
<keyword id="KW-1133">Transmembrane helix</keyword>
<reference key="1">
    <citation type="journal article" date="2008" name="J. Bacteriol.">
        <title>The pangenome structure of Escherichia coli: comparative genomic analysis of E. coli commensal and pathogenic isolates.</title>
        <authorList>
            <person name="Rasko D.A."/>
            <person name="Rosovitz M.J."/>
            <person name="Myers G.S.A."/>
            <person name="Mongodin E.F."/>
            <person name="Fricke W.F."/>
            <person name="Gajer P."/>
            <person name="Crabtree J."/>
            <person name="Sebaihia M."/>
            <person name="Thomson N.R."/>
            <person name="Chaudhuri R."/>
            <person name="Henderson I.R."/>
            <person name="Sperandio V."/>
            <person name="Ravel J."/>
        </authorList>
    </citation>
    <scope>NUCLEOTIDE SEQUENCE [LARGE SCALE GENOMIC DNA]</scope>
    <source>
        <strain>E24377A / ETEC</strain>
    </source>
</reference>
<dbReference type="EC" id="3.6.1.27" evidence="1"/>
<dbReference type="EMBL" id="CP000800">
    <property type="protein sequence ID" value="ABV20933.1"/>
    <property type="molecule type" value="Genomic_DNA"/>
</dbReference>
<dbReference type="SMR" id="A7ZRT8"/>
<dbReference type="KEGG" id="ecw:EcE24377A_3520"/>
<dbReference type="HOGENOM" id="CLU_060296_2_0_6"/>
<dbReference type="Proteomes" id="UP000001122">
    <property type="component" value="Chromosome"/>
</dbReference>
<dbReference type="GO" id="GO:0005886">
    <property type="term" value="C:plasma membrane"/>
    <property type="evidence" value="ECO:0007669"/>
    <property type="project" value="UniProtKB-SubCell"/>
</dbReference>
<dbReference type="GO" id="GO:0050380">
    <property type="term" value="F:undecaprenyl-diphosphatase activity"/>
    <property type="evidence" value="ECO:0007669"/>
    <property type="project" value="UniProtKB-UniRule"/>
</dbReference>
<dbReference type="GO" id="GO:0071555">
    <property type="term" value="P:cell wall organization"/>
    <property type="evidence" value="ECO:0007669"/>
    <property type="project" value="UniProtKB-KW"/>
</dbReference>
<dbReference type="GO" id="GO:0009252">
    <property type="term" value="P:peptidoglycan biosynthetic process"/>
    <property type="evidence" value="ECO:0007669"/>
    <property type="project" value="UniProtKB-KW"/>
</dbReference>
<dbReference type="GO" id="GO:0008360">
    <property type="term" value="P:regulation of cell shape"/>
    <property type="evidence" value="ECO:0007669"/>
    <property type="project" value="UniProtKB-KW"/>
</dbReference>
<dbReference type="GO" id="GO:0046677">
    <property type="term" value="P:response to antibiotic"/>
    <property type="evidence" value="ECO:0007669"/>
    <property type="project" value="UniProtKB-UniRule"/>
</dbReference>
<dbReference type="HAMAP" id="MF_01006">
    <property type="entry name" value="Undec_diphosphatase"/>
    <property type="match status" value="1"/>
</dbReference>
<dbReference type="InterPro" id="IPR003824">
    <property type="entry name" value="UppP"/>
</dbReference>
<dbReference type="NCBIfam" id="NF001388">
    <property type="entry name" value="PRK00281.1-1"/>
    <property type="match status" value="1"/>
</dbReference>
<dbReference type="NCBIfam" id="NF001389">
    <property type="entry name" value="PRK00281.1-2"/>
    <property type="match status" value="1"/>
</dbReference>
<dbReference type="NCBIfam" id="NF001390">
    <property type="entry name" value="PRK00281.1-4"/>
    <property type="match status" value="1"/>
</dbReference>
<dbReference type="NCBIfam" id="TIGR00753">
    <property type="entry name" value="undec_PP_bacA"/>
    <property type="match status" value="1"/>
</dbReference>
<dbReference type="PANTHER" id="PTHR30622">
    <property type="entry name" value="UNDECAPRENYL-DIPHOSPHATASE"/>
    <property type="match status" value="1"/>
</dbReference>
<dbReference type="PANTHER" id="PTHR30622:SF3">
    <property type="entry name" value="UNDECAPRENYL-DIPHOSPHATASE"/>
    <property type="match status" value="1"/>
</dbReference>
<dbReference type="Pfam" id="PF02673">
    <property type="entry name" value="BacA"/>
    <property type="match status" value="1"/>
</dbReference>
<proteinExistence type="inferred from homology"/>
<sequence>MSDMHSLLIAAILGVVEGLTEFLPVSSTGHMIIVGHLLGFEGDTAKTFEVVIQLGSILAVVVMFWRRLFGLIGIHFGRPLQHEGESKGRLTLIHILLGMIPAVVLGLLFHDTIKSLFNPINVMYALVVGGLLLIAAECLKPKEPRAPGLDDMTYRQAFMIGCFQCLALWPGFSRSGATISGGMLMGVSRYAASEFSFLLAVPMMMGATALDLYKSWGFLTTGDIPMFAVGFITAFVVALIAIKTFLQLIKRISFIPFAIYRFIVAAAVYVVFF</sequence>
<comment type="function">
    <text evidence="1">Catalyzes the dephosphorylation of undecaprenyl diphosphate (UPP). Confers resistance to bacitracin.</text>
</comment>
<comment type="catalytic activity">
    <reaction evidence="1">
        <text>di-trans,octa-cis-undecaprenyl diphosphate + H2O = di-trans,octa-cis-undecaprenyl phosphate + phosphate + H(+)</text>
        <dbReference type="Rhea" id="RHEA:28094"/>
        <dbReference type="ChEBI" id="CHEBI:15377"/>
        <dbReference type="ChEBI" id="CHEBI:15378"/>
        <dbReference type="ChEBI" id="CHEBI:43474"/>
        <dbReference type="ChEBI" id="CHEBI:58405"/>
        <dbReference type="ChEBI" id="CHEBI:60392"/>
        <dbReference type="EC" id="3.6.1.27"/>
    </reaction>
</comment>
<comment type="subcellular location">
    <subcellularLocation>
        <location evidence="1">Cell inner membrane</location>
        <topology evidence="1">Multi-pass membrane protein</topology>
    </subcellularLocation>
</comment>
<comment type="miscellaneous">
    <text>Bacitracin is thought to be involved in the inhibition of peptidoglycan synthesis by sequestering undecaprenyl diphosphate, thereby reducing the pool of lipid carrier available.</text>
</comment>
<comment type="similarity">
    <text evidence="1">Belongs to the UppP family.</text>
</comment>
<gene>
    <name evidence="1" type="primary">uppP</name>
    <name type="ordered locus">EcE24377A_3520</name>
</gene>
<feature type="chain" id="PRO_1000062796" description="Undecaprenyl-diphosphatase">
    <location>
        <begin position="1"/>
        <end position="273"/>
    </location>
</feature>
<feature type="transmembrane region" description="Helical" evidence="1">
    <location>
        <begin position="6"/>
        <end position="26"/>
    </location>
</feature>
<feature type="transmembrane region" description="Helical" evidence="1">
    <location>
        <begin position="45"/>
        <end position="65"/>
    </location>
</feature>
<feature type="transmembrane region" description="Helical" evidence="1">
    <location>
        <begin position="90"/>
        <end position="110"/>
    </location>
</feature>
<feature type="transmembrane region" description="Helical" evidence="1">
    <location>
        <begin position="116"/>
        <end position="136"/>
    </location>
</feature>
<feature type="transmembrane region" description="Helical" evidence="1">
    <location>
        <begin position="190"/>
        <end position="210"/>
    </location>
</feature>
<feature type="transmembrane region" description="Helical" evidence="1">
    <location>
        <begin position="222"/>
        <end position="242"/>
    </location>
</feature>
<feature type="transmembrane region" description="Helical" evidence="1">
    <location>
        <begin position="252"/>
        <end position="272"/>
    </location>
</feature>